<comment type="function">
    <text evidence="1">Catalyzes the transfer of the phosphoribosyl group of 5-phosphorylribose-1-pyrophosphate (PRPP) to anthranilate to yield N-(5'-phosphoribosyl)-anthranilate (PRA).</text>
</comment>
<comment type="catalytic activity">
    <reaction evidence="1">
        <text>N-(5-phospho-beta-D-ribosyl)anthranilate + diphosphate = 5-phospho-alpha-D-ribose 1-diphosphate + anthranilate</text>
        <dbReference type="Rhea" id="RHEA:11768"/>
        <dbReference type="ChEBI" id="CHEBI:16567"/>
        <dbReference type="ChEBI" id="CHEBI:18277"/>
        <dbReference type="ChEBI" id="CHEBI:33019"/>
        <dbReference type="ChEBI" id="CHEBI:58017"/>
        <dbReference type="EC" id="2.4.2.18"/>
    </reaction>
</comment>
<comment type="cofactor">
    <cofactor evidence="1">
        <name>Mg(2+)</name>
        <dbReference type="ChEBI" id="CHEBI:18420"/>
    </cofactor>
    <text evidence="1">Binds 2 magnesium ions per monomer.</text>
</comment>
<comment type="pathway">
    <text evidence="1">Amino-acid biosynthesis; L-tryptophan biosynthesis; L-tryptophan from chorismate: step 2/5.</text>
</comment>
<comment type="subunit">
    <text evidence="1">Homodimer.</text>
</comment>
<comment type="similarity">
    <text evidence="1">Belongs to the anthranilate phosphoribosyltransferase family.</text>
</comment>
<name>TRPD_ALKEH</name>
<dbReference type="EC" id="2.4.2.18" evidence="1"/>
<dbReference type="EMBL" id="CP000453">
    <property type="protein sequence ID" value="ABI57590.1"/>
    <property type="molecule type" value="Genomic_DNA"/>
</dbReference>
<dbReference type="RefSeq" id="WP_011629984.1">
    <property type="nucleotide sequence ID" value="NC_008340.1"/>
</dbReference>
<dbReference type="SMR" id="Q0A6E7"/>
<dbReference type="KEGG" id="aeh:Mlg_2248"/>
<dbReference type="eggNOG" id="COG0547">
    <property type="taxonomic scope" value="Bacteria"/>
</dbReference>
<dbReference type="HOGENOM" id="CLU_034315_2_1_6"/>
<dbReference type="OrthoDB" id="9806430at2"/>
<dbReference type="UniPathway" id="UPA00035">
    <property type="reaction ID" value="UER00041"/>
</dbReference>
<dbReference type="Proteomes" id="UP000001962">
    <property type="component" value="Chromosome"/>
</dbReference>
<dbReference type="GO" id="GO:0005829">
    <property type="term" value="C:cytosol"/>
    <property type="evidence" value="ECO:0007669"/>
    <property type="project" value="TreeGrafter"/>
</dbReference>
<dbReference type="GO" id="GO:0004048">
    <property type="term" value="F:anthranilate phosphoribosyltransferase activity"/>
    <property type="evidence" value="ECO:0007669"/>
    <property type="project" value="UniProtKB-UniRule"/>
</dbReference>
<dbReference type="GO" id="GO:0000287">
    <property type="term" value="F:magnesium ion binding"/>
    <property type="evidence" value="ECO:0007669"/>
    <property type="project" value="UniProtKB-UniRule"/>
</dbReference>
<dbReference type="GO" id="GO:0000162">
    <property type="term" value="P:L-tryptophan biosynthetic process"/>
    <property type="evidence" value="ECO:0007669"/>
    <property type="project" value="UniProtKB-UniRule"/>
</dbReference>
<dbReference type="FunFam" id="1.20.970.10:FF:000006">
    <property type="entry name" value="Anthranilate phosphoribosyltransferase"/>
    <property type="match status" value="1"/>
</dbReference>
<dbReference type="FunFam" id="3.40.1030.10:FF:000002">
    <property type="entry name" value="Anthranilate phosphoribosyltransferase"/>
    <property type="match status" value="1"/>
</dbReference>
<dbReference type="Gene3D" id="3.40.1030.10">
    <property type="entry name" value="Nucleoside phosphorylase/phosphoribosyltransferase catalytic domain"/>
    <property type="match status" value="1"/>
</dbReference>
<dbReference type="Gene3D" id="1.20.970.10">
    <property type="entry name" value="Transferase, Pyrimidine Nucleoside Phosphorylase, Chain C"/>
    <property type="match status" value="1"/>
</dbReference>
<dbReference type="HAMAP" id="MF_00211">
    <property type="entry name" value="TrpD"/>
    <property type="match status" value="1"/>
</dbReference>
<dbReference type="InterPro" id="IPR005940">
    <property type="entry name" value="Anthranilate_Pribosyl_Tfrase"/>
</dbReference>
<dbReference type="InterPro" id="IPR000312">
    <property type="entry name" value="Glycosyl_Trfase_fam3"/>
</dbReference>
<dbReference type="InterPro" id="IPR017459">
    <property type="entry name" value="Glycosyl_Trfase_fam3_N_dom"/>
</dbReference>
<dbReference type="InterPro" id="IPR036320">
    <property type="entry name" value="Glycosyl_Trfase_fam3_N_dom_sf"/>
</dbReference>
<dbReference type="InterPro" id="IPR035902">
    <property type="entry name" value="Nuc_phospho_transferase"/>
</dbReference>
<dbReference type="NCBIfam" id="TIGR01245">
    <property type="entry name" value="trpD"/>
    <property type="match status" value="1"/>
</dbReference>
<dbReference type="PANTHER" id="PTHR43285">
    <property type="entry name" value="ANTHRANILATE PHOSPHORIBOSYLTRANSFERASE"/>
    <property type="match status" value="1"/>
</dbReference>
<dbReference type="PANTHER" id="PTHR43285:SF2">
    <property type="entry name" value="ANTHRANILATE PHOSPHORIBOSYLTRANSFERASE"/>
    <property type="match status" value="1"/>
</dbReference>
<dbReference type="Pfam" id="PF02885">
    <property type="entry name" value="Glycos_trans_3N"/>
    <property type="match status" value="1"/>
</dbReference>
<dbReference type="Pfam" id="PF00591">
    <property type="entry name" value="Glycos_transf_3"/>
    <property type="match status" value="1"/>
</dbReference>
<dbReference type="SUPFAM" id="SSF52418">
    <property type="entry name" value="Nucleoside phosphorylase/phosphoribosyltransferase catalytic domain"/>
    <property type="match status" value="1"/>
</dbReference>
<dbReference type="SUPFAM" id="SSF47648">
    <property type="entry name" value="Nucleoside phosphorylase/phosphoribosyltransferase N-terminal domain"/>
    <property type="match status" value="1"/>
</dbReference>
<keyword id="KW-0028">Amino-acid biosynthesis</keyword>
<keyword id="KW-0057">Aromatic amino acid biosynthesis</keyword>
<keyword id="KW-0328">Glycosyltransferase</keyword>
<keyword id="KW-0460">Magnesium</keyword>
<keyword id="KW-0479">Metal-binding</keyword>
<keyword id="KW-1185">Reference proteome</keyword>
<keyword id="KW-0808">Transferase</keyword>
<keyword id="KW-0822">Tryptophan biosynthesis</keyword>
<reference key="1">
    <citation type="submission" date="2006-08" db="EMBL/GenBank/DDBJ databases">
        <title>Complete sequence of Alkalilimnicola ehrilichei MLHE-1.</title>
        <authorList>
            <person name="Copeland A."/>
            <person name="Lucas S."/>
            <person name="Lapidus A."/>
            <person name="Barry K."/>
            <person name="Detter J.C."/>
            <person name="Glavina del Rio T."/>
            <person name="Hammon N."/>
            <person name="Israni S."/>
            <person name="Dalin E."/>
            <person name="Tice H."/>
            <person name="Pitluck S."/>
            <person name="Sims D."/>
            <person name="Brettin T."/>
            <person name="Bruce D."/>
            <person name="Han C."/>
            <person name="Tapia R."/>
            <person name="Gilna P."/>
            <person name="Schmutz J."/>
            <person name="Larimer F."/>
            <person name="Land M."/>
            <person name="Hauser L."/>
            <person name="Kyrpides N."/>
            <person name="Mikhailova N."/>
            <person name="Oremland R.S."/>
            <person name="Hoeft S.E."/>
            <person name="Switzer-Blum J."/>
            <person name="Kulp T."/>
            <person name="King G."/>
            <person name="Tabita R."/>
            <person name="Witte B."/>
            <person name="Santini J.M."/>
            <person name="Basu P."/>
            <person name="Hollibaugh J.T."/>
            <person name="Xie G."/>
            <person name="Stolz J.F."/>
            <person name="Richardson P."/>
        </authorList>
    </citation>
    <scope>NUCLEOTIDE SEQUENCE [LARGE SCALE GENOMIC DNA]</scope>
    <source>
        <strain>ATCC BAA-1101 / DSM 17681 / MLHE-1</strain>
    </source>
</reference>
<feature type="chain" id="PRO_1000042986" description="Anthranilate phosphoribosyltransferase">
    <location>
        <begin position="1"/>
        <end position="338"/>
    </location>
</feature>
<feature type="binding site" evidence="1">
    <location>
        <position position="81"/>
    </location>
    <ligand>
        <name>5-phospho-alpha-D-ribose 1-diphosphate</name>
        <dbReference type="ChEBI" id="CHEBI:58017"/>
    </ligand>
</feature>
<feature type="binding site" evidence="1">
    <location>
        <position position="81"/>
    </location>
    <ligand>
        <name>anthranilate</name>
        <dbReference type="ChEBI" id="CHEBI:16567"/>
        <label>1</label>
    </ligand>
</feature>
<feature type="binding site" evidence="1">
    <location>
        <begin position="84"/>
        <end position="85"/>
    </location>
    <ligand>
        <name>5-phospho-alpha-D-ribose 1-diphosphate</name>
        <dbReference type="ChEBI" id="CHEBI:58017"/>
    </ligand>
</feature>
<feature type="binding site" evidence="1">
    <location>
        <position position="89"/>
    </location>
    <ligand>
        <name>5-phospho-alpha-D-ribose 1-diphosphate</name>
        <dbReference type="ChEBI" id="CHEBI:58017"/>
    </ligand>
</feature>
<feature type="binding site" evidence="1">
    <location>
        <begin position="91"/>
        <end position="94"/>
    </location>
    <ligand>
        <name>5-phospho-alpha-D-ribose 1-diphosphate</name>
        <dbReference type="ChEBI" id="CHEBI:58017"/>
    </ligand>
</feature>
<feature type="binding site" evidence="1">
    <location>
        <position position="93"/>
    </location>
    <ligand>
        <name>Mg(2+)</name>
        <dbReference type="ChEBI" id="CHEBI:18420"/>
        <label>1</label>
    </ligand>
</feature>
<feature type="binding site" evidence="1">
    <location>
        <begin position="109"/>
        <end position="117"/>
    </location>
    <ligand>
        <name>5-phospho-alpha-D-ribose 1-diphosphate</name>
        <dbReference type="ChEBI" id="CHEBI:58017"/>
    </ligand>
</feature>
<feature type="binding site" evidence="1">
    <location>
        <position position="112"/>
    </location>
    <ligand>
        <name>anthranilate</name>
        <dbReference type="ChEBI" id="CHEBI:16567"/>
        <label>1</label>
    </ligand>
</feature>
<feature type="binding site" evidence="1">
    <location>
        <position position="121"/>
    </location>
    <ligand>
        <name>5-phospho-alpha-D-ribose 1-diphosphate</name>
        <dbReference type="ChEBI" id="CHEBI:58017"/>
    </ligand>
</feature>
<feature type="binding site" evidence="1">
    <location>
        <position position="167"/>
    </location>
    <ligand>
        <name>anthranilate</name>
        <dbReference type="ChEBI" id="CHEBI:16567"/>
        <label>2</label>
    </ligand>
</feature>
<feature type="binding site" evidence="1">
    <location>
        <position position="226"/>
    </location>
    <ligand>
        <name>Mg(2+)</name>
        <dbReference type="ChEBI" id="CHEBI:18420"/>
        <label>2</label>
    </ligand>
</feature>
<feature type="binding site" evidence="1">
    <location>
        <position position="227"/>
    </location>
    <ligand>
        <name>Mg(2+)</name>
        <dbReference type="ChEBI" id="CHEBI:18420"/>
        <label>1</label>
    </ligand>
</feature>
<feature type="binding site" evidence="1">
    <location>
        <position position="227"/>
    </location>
    <ligand>
        <name>Mg(2+)</name>
        <dbReference type="ChEBI" id="CHEBI:18420"/>
        <label>2</label>
    </ligand>
</feature>
<evidence type="ECO:0000255" key="1">
    <source>
        <dbReference type="HAMAP-Rule" id="MF_00211"/>
    </source>
</evidence>
<gene>
    <name evidence="1" type="primary">trpD</name>
    <name type="ordered locus">Mlg_2248</name>
</gene>
<sequence>MDMQGAIRLVTEGTDLTEAEMTEVMRQIMTGEATPAQIGGFLIGLRMKGETVAEITAAARVMRELATRVTVDEPHLLDTCGTGGDASHTLNVSTACAFVAAAGGARVAKHGNRSVSSSCGSADVLEAAGARLDLNADQVAECIRRVGVGFLFAPQHHSAMKHAIGPRREMGVRTLFNILGPLTNPAGAPHQLLGVYNKHWVVPVAETLRALGSRRVLVVHADDGLDEISIGSDTLVAELNEGEIHEYRITPEQFGLPRAELSDLQVGTAEESLALIREAFAGWEGPAFNIIAINAGAALYAAEKAPTLDAGVAGAAELLRNGSALRKLEAFVRCTREV</sequence>
<proteinExistence type="inferred from homology"/>
<organism>
    <name type="scientific">Alkalilimnicola ehrlichii (strain ATCC BAA-1101 / DSM 17681 / MLHE-1)</name>
    <dbReference type="NCBI Taxonomy" id="187272"/>
    <lineage>
        <taxon>Bacteria</taxon>
        <taxon>Pseudomonadati</taxon>
        <taxon>Pseudomonadota</taxon>
        <taxon>Gammaproteobacteria</taxon>
        <taxon>Chromatiales</taxon>
        <taxon>Ectothiorhodospiraceae</taxon>
        <taxon>Alkalilimnicola</taxon>
    </lineage>
</organism>
<accession>Q0A6E7</accession>
<protein>
    <recommendedName>
        <fullName evidence="1">Anthranilate phosphoribosyltransferase</fullName>
        <ecNumber evidence="1">2.4.2.18</ecNumber>
    </recommendedName>
</protein>